<reference key="1">
    <citation type="journal article" date="2001" name="Lancet">
        <title>Whole genome sequencing of meticillin-resistant Staphylococcus aureus.</title>
        <authorList>
            <person name="Kuroda M."/>
            <person name="Ohta T."/>
            <person name="Uchiyama I."/>
            <person name="Baba T."/>
            <person name="Yuzawa H."/>
            <person name="Kobayashi I."/>
            <person name="Cui L."/>
            <person name="Oguchi A."/>
            <person name="Aoki K."/>
            <person name="Nagai Y."/>
            <person name="Lian J.-Q."/>
            <person name="Ito T."/>
            <person name="Kanamori M."/>
            <person name="Matsumaru H."/>
            <person name="Maruyama A."/>
            <person name="Murakami H."/>
            <person name="Hosoyama A."/>
            <person name="Mizutani-Ui Y."/>
            <person name="Takahashi N.K."/>
            <person name="Sawano T."/>
            <person name="Inoue R."/>
            <person name="Kaito C."/>
            <person name="Sekimizu K."/>
            <person name="Hirakawa H."/>
            <person name="Kuhara S."/>
            <person name="Goto S."/>
            <person name="Yabuzaki J."/>
            <person name="Kanehisa M."/>
            <person name="Yamashita A."/>
            <person name="Oshima K."/>
            <person name="Furuya K."/>
            <person name="Yoshino C."/>
            <person name="Shiba T."/>
            <person name="Hattori M."/>
            <person name="Ogasawara N."/>
            <person name="Hayashi H."/>
            <person name="Hiramatsu K."/>
        </authorList>
    </citation>
    <scope>NUCLEOTIDE SEQUENCE [LARGE SCALE GENOMIC DNA]</scope>
    <source>
        <strain>Mu50 / ATCC 700699</strain>
    </source>
</reference>
<comment type="catalytic activity">
    <reaction>
        <text>pyruvate + ATP = phosphoenolpyruvate + ADP + H(+)</text>
        <dbReference type="Rhea" id="RHEA:18157"/>
        <dbReference type="ChEBI" id="CHEBI:15361"/>
        <dbReference type="ChEBI" id="CHEBI:15378"/>
        <dbReference type="ChEBI" id="CHEBI:30616"/>
        <dbReference type="ChEBI" id="CHEBI:58702"/>
        <dbReference type="ChEBI" id="CHEBI:456216"/>
        <dbReference type="EC" id="2.7.1.40"/>
    </reaction>
</comment>
<comment type="cofactor">
    <cofactor evidence="1">
        <name>Mg(2+)</name>
        <dbReference type="ChEBI" id="CHEBI:18420"/>
    </cofactor>
</comment>
<comment type="cofactor">
    <cofactor evidence="1">
        <name>K(+)</name>
        <dbReference type="ChEBI" id="CHEBI:29103"/>
    </cofactor>
</comment>
<comment type="pathway">
    <text>Carbohydrate degradation; glycolysis; pyruvate from D-glyceraldehyde 3-phosphate: step 5/5.</text>
</comment>
<comment type="similarity">
    <text evidence="3">Belongs to the pyruvate kinase family.</text>
</comment>
<comment type="similarity">
    <text evidence="3">In the C-terminal section; belongs to the PEP-utilizing enzyme family.</text>
</comment>
<keyword id="KW-0067">ATP-binding</keyword>
<keyword id="KW-0324">Glycolysis</keyword>
<keyword id="KW-0418">Kinase</keyword>
<keyword id="KW-0460">Magnesium</keyword>
<keyword id="KW-0479">Metal-binding</keyword>
<keyword id="KW-0547">Nucleotide-binding</keyword>
<keyword id="KW-0630">Potassium</keyword>
<keyword id="KW-0670">Pyruvate</keyword>
<keyword id="KW-0808">Transferase</keyword>
<accession>Q99TG5</accession>
<sequence>MRKTKIVCTIGPASESEEMIEKLINAGMNVARLNFSHGSHEEHKGRIDTIRKVAKRLDKIVAILLDTKGPEIRTHNMKDGIIELERGNEVIVSMNEVEGTPEKFSVTYENLINDVQVGSYILLDDGLIELQVKDIDHAKKEVKCDILNSGELKNKKGVNLPGVRVSLPGITEKDAEDIRFGIKENVDFIAASFVRRPSDVLEIREILEEQKANISVFPKIENQEGIDNIAEILEVSDGLMVARGDMGVEIPPEKVPMVQKDLIRQCNKLGKPVITATQMLDSMQRNPRATRAEASDVANAIYDGTDAVMLSGETAAGLYPEEAVKTMRNIAVSAEAAQDYKKLLSDRTKLVETSLVNAIGISVAHTALNLNVKAIVAATESGSTARTISKYRPHSDIIAVTPSEETARQCSIVWGVQPVVKKGRKSTDALLNNAVATAVETGRVSNGDLIIITAGVPTGETGTTNMMKIHLVGDEIANGQGIGRGSVVGTTLVAETVKDLEGKDLSDKVIVTNSIDETFVPYVEKALGLITEENGITSPSAIVGLEKGIPTVVGVEKAVKNISNNMLVTIDAAQGKIFEGYANVL</sequence>
<feature type="chain" id="PRO_0000294132" description="Pyruvate kinase">
    <location>
        <begin position="1"/>
        <end position="585"/>
    </location>
</feature>
<feature type="binding site" evidence="1">
    <location>
        <position position="32"/>
    </location>
    <ligand>
        <name>substrate</name>
    </ligand>
</feature>
<feature type="binding site" evidence="2">
    <location>
        <begin position="34"/>
        <end position="37"/>
    </location>
    <ligand>
        <name>ATP</name>
        <dbReference type="ChEBI" id="CHEBI:30616"/>
    </ligand>
</feature>
<feature type="binding site" evidence="1">
    <location>
        <position position="34"/>
    </location>
    <ligand>
        <name>K(+)</name>
        <dbReference type="ChEBI" id="CHEBI:29103"/>
    </ligand>
</feature>
<feature type="binding site" evidence="1">
    <location>
        <position position="36"/>
    </location>
    <ligand>
        <name>K(+)</name>
        <dbReference type="ChEBI" id="CHEBI:29103"/>
    </ligand>
</feature>
<feature type="binding site" evidence="1">
    <location>
        <position position="66"/>
    </location>
    <ligand>
        <name>K(+)</name>
        <dbReference type="ChEBI" id="CHEBI:29103"/>
    </ligand>
</feature>
<feature type="binding site" evidence="1">
    <location>
        <position position="67"/>
    </location>
    <ligand>
        <name>K(+)</name>
        <dbReference type="ChEBI" id="CHEBI:29103"/>
    </ligand>
</feature>
<feature type="binding site" evidence="2">
    <location>
        <position position="73"/>
    </location>
    <ligand>
        <name>ATP</name>
        <dbReference type="ChEBI" id="CHEBI:30616"/>
    </ligand>
</feature>
<feature type="binding site" evidence="2">
    <location>
        <position position="156"/>
    </location>
    <ligand>
        <name>ATP</name>
        <dbReference type="ChEBI" id="CHEBI:30616"/>
    </ligand>
</feature>
<feature type="binding site" evidence="1">
    <location>
        <position position="221"/>
    </location>
    <ligand>
        <name>Mg(2+)</name>
        <dbReference type="ChEBI" id="CHEBI:18420"/>
    </ligand>
</feature>
<feature type="binding site" evidence="1">
    <location>
        <position position="244"/>
    </location>
    <ligand>
        <name>substrate</name>
    </ligand>
</feature>
<feature type="binding site" evidence="1">
    <location>
        <position position="245"/>
    </location>
    <ligand>
        <name>Mg(2+)</name>
        <dbReference type="ChEBI" id="CHEBI:18420"/>
    </ligand>
</feature>
<feature type="binding site" evidence="1">
    <location>
        <position position="245"/>
    </location>
    <ligand>
        <name>substrate</name>
    </ligand>
</feature>
<feature type="binding site" evidence="1">
    <location>
        <position position="277"/>
    </location>
    <ligand>
        <name>substrate</name>
    </ligand>
</feature>
<feature type="site" description="Transition state stabilizer" evidence="1">
    <location>
        <position position="219"/>
    </location>
</feature>
<evidence type="ECO:0000250" key="1"/>
<evidence type="ECO:0000250" key="2">
    <source>
        <dbReference type="UniProtKB" id="P14618"/>
    </source>
</evidence>
<evidence type="ECO:0000305" key="3"/>
<gene>
    <name type="primary">pyk</name>
    <name type="ordered locus">SAV1697</name>
</gene>
<organism>
    <name type="scientific">Staphylococcus aureus (strain Mu50 / ATCC 700699)</name>
    <dbReference type="NCBI Taxonomy" id="158878"/>
    <lineage>
        <taxon>Bacteria</taxon>
        <taxon>Bacillati</taxon>
        <taxon>Bacillota</taxon>
        <taxon>Bacilli</taxon>
        <taxon>Bacillales</taxon>
        <taxon>Staphylococcaceae</taxon>
        <taxon>Staphylococcus</taxon>
    </lineage>
</organism>
<proteinExistence type="inferred from homology"/>
<name>KPYK_STAAM</name>
<protein>
    <recommendedName>
        <fullName>Pyruvate kinase</fullName>
        <shortName>PK</shortName>
        <ecNumber>2.7.1.40</ecNumber>
    </recommendedName>
</protein>
<dbReference type="EC" id="2.7.1.40"/>
<dbReference type="EMBL" id="BA000017">
    <property type="protein sequence ID" value="BAB57859.1"/>
    <property type="molecule type" value="Genomic_DNA"/>
</dbReference>
<dbReference type="RefSeq" id="WP_001232648.1">
    <property type="nucleotide sequence ID" value="NC_002758.2"/>
</dbReference>
<dbReference type="SMR" id="Q99TG5"/>
<dbReference type="KEGG" id="sav:SAV1697"/>
<dbReference type="HOGENOM" id="CLU_015439_0_2_9"/>
<dbReference type="PhylomeDB" id="Q99TG5"/>
<dbReference type="UniPathway" id="UPA00109">
    <property type="reaction ID" value="UER00188"/>
</dbReference>
<dbReference type="Proteomes" id="UP000002481">
    <property type="component" value="Chromosome"/>
</dbReference>
<dbReference type="GO" id="GO:0005524">
    <property type="term" value="F:ATP binding"/>
    <property type="evidence" value="ECO:0007669"/>
    <property type="project" value="UniProtKB-KW"/>
</dbReference>
<dbReference type="GO" id="GO:0016301">
    <property type="term" value="F:kinase activity"/>
    <property type="evidence" value="ECO:0007669"/>
    <property type="project" value="UniProtKB-KW"/>
</dbReference>
<dbReference type="GO" id="GO:0000287">
    <property type="term" value="F:magnesium ion binding"/>
    <property type="evidence" value="ECO:0007669"/>
    <property type="project" value="InterPro"/>
</dbReference>
<dbReference type="GO" id="GO:0030955">
    <property type="term" value="F:potassium ion binding"/>
    <property type="evidence" value="ECO:0007669"/>
    <property type="project" value="InterPro"/>
</dbReference>
<dbReference type="GO" id="GO:0004743">
    <property type="term" value="F:pyruvate kinase activity"/>
    <property type="evidence" value="ECO:0007669"/>
    <property type="project" value="UniProtKB-EC"/>
</dbReference>
<dbReference type="FunFam" id="2.40.33.10:FF:000001">
    <property type="entry name" value="Pyruvate kinase"/>
    <property type="match status" value="1"/>
</dbReference>
<dbReference type="FunFam" id="3.20.20.60:FF:000001">
    <property type="entry name" value="Pyruvate kinase"/>
    <property type="match status" value="1"/>
</dbReference>
<dbReference type="FunFam" id="3.40.1380.20:FF:000017">
    <property type="entry name" value="Pyruvate kinase"/>
    <property type="match status" value="1"/>
</dbReference>
<dbReference type="Gene3D" id="3.20.20.60">
    <property type="entry name" value="Phosphoenolpyruvate-binding domains"/>
    <property type="match status" value="1"/>
</dbReference>
<dbReference type="Gene3D" id="3.50.30.10">
    <property type="entry name" value="Phosphohistidine domain"/>
    <property type="match status" value="1"/>
</dbReference>
<dbReference type="Gene3D" id="2.40.33.10">
    <property type="entry name" value="PK beta-barrel domain-like"/>
    <property type="match status" value="1"/>
</dbReference>
<dbReference type="Gene3D" id="3.40.1380.20">
    <property type="entry name" value="Pyruvate kinase, C-terminal domain"/>
    <property type="match status" value="1"/>
</dbReference>
<dbReference type="InterPro" id="IPR008279">
    <property type="entry name" value="PEP-util_enz_mobile_dom"/>
</dbReference>
<dbReference type="InterPro" id="IPR036637">
    <property type="entry name" value="Phosphohistidine_dom_sf"/>
</dbReference>
<dbReference type="InterPro" id="IPR001697">
    <property type="entry name" value="Pyr_Knase"/>
</dbReference>
<dbReference type="InterPro" id="IPR015813">
    <property type="entry name" value="Pyrv/PenolPyrv_kinase-like_dom"/>
</dbReference>
<dbReference type="InterPro" id="IPR040442">
    <property type="entry name" value="Pyrv_kinase-like_dom_sf"/>
</dbReference>
<dbReference type="InterPro" id="IPR011037">
    <property type="entry name" value="Pyrv_Knase-like_insert_dom_sf"/>
</dbReference>
<dbReference type="InterPro" id="IPR015793">
    <property type="entry name" value="Pyrv_Knase_brl"/>
</dbReference>
<dbReference type="InterPro" id="IPR015795">
    <property type="entry name" value="Pyrv_Knase_C"/>
</dbReference>
<dbReference type="InterPro" id="IPR036918">
    <property type="entry name" value="Pyrv_Knase_C_sf"/>
</dbReference>
<dbReference type="InterPro" id="IPR015806">
    <property type="entry name" value="Pyrv_Knase_insert_dom_sf"/>
</dbReference>
<dbReference type="NCBIfam" id="NF004491">
    <property type="entry name" value="PRK05826.1"/>
    <property type="match status" value="1"/>
</dbReference>
<dbReference type="NCBIfam" id="NF004978">
    <property type="entry name" value="PRK06354.1"/>
    <property type="match status" value="1"/>
</dbReference>
<dbReference type="NCBIfam" id="TIGR01064">
    <property type="entry name" value="pyruv_kin"/>
    <property type="match status" value="1"/>
</dbReference>
<dbReference type="PANTHER" id="PTHR11817">
    <property type="entry name" value="PYRUVATE KINASE"/>
    <property type="match status" value="1"/>
</dbReference>
<dbReference type="Pfam" id="PF00391">
    <property type="entry name" value="PEP-utilizers"/>
    <property type="match status" value="1"/>
</dbReference>
<dbReference type="Pfam" id="PF00224">
    <property type="entry name" value="PK"/>
    <property type="match status" value="1"/>
</dbReference>
<dbReference type="Pfam" id="PF02887">
    <property type="entry name" value="PK_C"/>
    <property type="match status" value="1"/>
</dbReference>
<dbReference type="PRINTS" id="PR01050">
    <property type="entry name" value="PYRUVTKNASE"/>
</dbReference>
<dbReference type="SUPFAM" id="SSF51621">
    <property type="entry name" value="Phosphoenolpyruvate/pyruvate domain"/>
    <property type="match status" value="1"/>
</dbReference>
<dbReference type="SUPFAM" id="SSF52009">
    <property type="entry name" value="Phosphohistidine domain"/>
    <property type="match status" value="1"/>
</dbReference>
<dbReference type="SUPFAM" id="SSF50800">
    <property type="entry name" value="PK beta-barrel domain-like"/>
    <property type="match status" value="1"/>
</dbReference>
<dbReference type="SUPFAM" id="SSF52935">
    <property type="entry name" value="PK C-terminal domain-like"/>
    <property type="match status" value="1"/>
</dbReference>